<organism>
    <name type="scientific">Streptococcus thermophilus (strain CNRZ 1066)</name>
    <dbReference type="NCBI Taxonomy" id="299768"/>
    <lineage>
        <taxon>Bacteria</taxon>
        <taxon>Bacillati</taxon>
        <taxon>Bacillota</taxon>
        <taxon>Bacilli</taxon>
        <taxon>Lactobacillales</taxon>
        <taxon>Streptococcaceae</taxon>
        <taxon>Streptococcus</taxon>
    </lineage>
</organism>
<accession>Q5LXS5</accession>
<reference key="1">
    <citation type="journal article" date="2004" name="Nat. Biotechnol.">
        <title>Complete sequence and comparative genome analysis of the dairy bacterium Streptococcus thermophilus.</title>
        <authorList>
            <person name="Bolotin A."/>
            <person name="Quinquis B."/>
            <person name="Renault P."/>
            <person name="Sorokin A."/>
            <person name="Ehrlich S.D."/>
            <person name="Kulakauskas S."/>
            <person name="Lapidus A."/>
            <person name="Goltsman E."/>
            <person name="Mazur M."/>
            <person name="Pusch G.D."/>
            <person name="Fonstein M."/>
            <person name="Overbeek R."/>
            <person name="Kyprides N."/>
            <person name="Purnelle B."/>
            <person name="Prozzi D."/>
            <person name="Ngui K."/>
            <person name="Masuy D."/>
            <person name="Hancy F."/>
            <person name="Burteau S."/>
            <person name="Boutry M."/>
            <person name="Delcour J."/>
            <person name="Goffeau A."/>
            <person name="Hols P."/>
        </authorList>
    </citation>
    <scope>NUCLEOTIDE SEQUENCE [LARGE SCALE GENOMIC DNA]</scope>
    <source>
        <strain>CNRZ 1066</strain>
    </source>
</reference>
<protein>
    <recommendedName>
        <fullName evidence="1">Small ribosomal subunit protein uS8</fullName>
    </recommendedName>
    <alternativeName>
        <fullName evidence="2">30S ribosomal protein S8</fullName>
    </alternativeName>
</protein>
<proteinExistence type="inferred from homology"/>
<comment type="function">
    <text evidence="1">One of the primary rRNA binding proteins, it binds directly to 16S rRNA central domain where it helps coordinate assembly of the platform of the 30S subunit.</text>
</comment>
<comment type="subunit">
    <text evidence="1">Part of the 30S ribosomal subunit. Contacts proteins S5 and S12.</text>
</comment>
<comment type="similarity">
    <text evidence="1">Belongs to the universal ribosomal protein uS8 family.</text>
</comment>
<dbReference type="EMBL" id="CP000024">
    <property type="protein sequence ID" value="AAV63433.1"/>
    <property type="molecule type" value="Genomic_DNA"/>
</dbReference>
<dbReference type="RefSeq" id="WP_002952146.1">
    <property type="nucleotide sequence ID" value="NC_006449.1"/>
</dbReference>
<dbReference type="SMR" id="Q5LXS5"/>
<dbReference type="GeneID" id="66899648"/>
<dbReference type="KEGG" id="stc:str1920"/>
<dbReference type="HOGENOM" id="CLU_098428_0_2_9"/>
<dbReference type="GO" id="GO:1990904">
    <property type="term" value="C:ribonucleoprotein complex"/>
    <property type="evidence" value="ECO:0007669"/>
    <property type="project" value="UniProtKB-KW"/>
</dbReference>
<dbReference type="GO" id="GO:0005840">
    <property type="term" value="C:ribosome"/>
    <property type="evidence" value="ECO:0007669"/>
    <property type="project" value="UniProtKB-KW"/>
</dbReference>
<dbReference type="GO" id="GO:0019843">
    <property type="term" value="F:rRNA binding"/>
    <property type="evidence" value="ECO:0007669"/>
    <property type="project" value="UniProtKB-UniRule"/>
</dbReference>
<dbReference type="GO" id="GO:0003735">
    <property type="term" value="F:structural constituent of ribosome"/>
    <property type="evidence" value="ECO:0007669"/>
    <property type="project" value="InterPro"/>
</dbReference>
<dbReference type="GO" id="GO:0006412">
    <property type="term" value="P:translation"/>
    <property type="evidence" value="ECO:0007669"/>
    <property type="project" value="UniProtKB-UniRule"/>
</dbReference>
<dbReference type="FunFam" id="3.30.1370.30:FF:000002">
    <property type="entry name" value="30S ribosomal protein S8"/>
    <property type="match status" value="1"/>
</dbReference>
<dbReference type="FunFam" id="3.30.1490.10:FF:000001">
    <property type="entry name" value="30S ribosomal protein S8"/>
    <property type="match status" value="1"/>
</dbReference>
<dbReference type="Gene3D" id="3.30.1370.30">
    <property type="match status" value="1"/>
</dbReference>
<dbReference type="Gene3D" id="3.30.1490.10">
    <property type="match status" value="1"/>
</dbReference>
<dbReference type="HAMAP" id="MF_01302_B">
    <property type="entry name" value="Ribosomal_uS8_B"/>
    <property type="match status" value="1"/>
</dbReference>
<dbReference type="InterPro" id="IPR000630">
    <property type="entry name" value="Ribosomal_uS8"/>
</dbReference>
<dbReference type="InterPro" id="IPR047863">
    <property type="entry name" value="Ribosomal_uS8_CS"/>
</dbReference>
<dbReference type="InterPro" id="IPR035987">
    <property type="entry name" value="Ribosomal_uS8_sf"/>
</dbReference>
<dbReference type="NCBIfam" id="NF001109">
    <property type="entry name" value="PRK00136.1"/>
    <property type="match status" value="1"/>
</dbReference>
<dbReference type="PANTHER" id="PTHR11758">
    <property type="entry name" value="40S RIBOSOMAL PROTEIN S15A"/>
    <property type="match status" value="1"/>
</dbReference>
<dbReference type="Pfam" id="PF00410">
    <property type="entry name" value="Ribosomal_S8"/>
    <property type="match status" value="1"/>
</dbReference>
<dbReference type="SUPFAM" id="SSF56047">
    <property type="entry name" value="Ribosomal protein S8"/>
    <property type="match status" value="1"/>
</dbReference>
<dbReference type="PROSITE" id="PS00053">
    <property type="entry name" value="RIBOSOMAL_S8"/>
    <property type="match status" value="1"/>
</dbReference>
<gene>
    <name evidence="1" type="primary">rpsH</name>
    <name type="ordered locus">str1920</name>
</gene>
<feature type="chain" id="PRO_0000126502" description="Small ribosomal subunit protein uS8">
    <location>
        <begin position="1"/>
        <end position="132"/>
    </location>
</feature>
<keyword id="KW-0687">Ribonucleoprotein</keyword>
<keyword id="KW-0689">Ribosomal protein</keyword>
<keyword id="KW-0694">RNA-binding</keyword>
<keyword id="KW-0699">rRNA-binding</keyword>
<evidence type="ECO:0000255" key="1">
    <source>
        <dbReference type="HAMAP-Rule" id="MF_01302"/>
    </source>
</evidence>
<evidence type="ECO:0000305" key="2"/>
<sequence>MVMTDPIADFLTRIRNANQAKHEVLEVPASNIKKGIAEILKREGFVKNVEVIEDDKQGIIRVFLKYGQNGERVITNLKRISKPGLRVYSKREDIPKVLNGLGIAIISTSEGLLTDKEARQKNVGGEVIAYVW</sequence>
<name>RS8_STRT1</name>